<feature type="chain" id="PRO_1000057701" description="Mannonate dehydratase">
    <location>
        <begin position="1"/>
        <end position="394"/>
    </location>
</feature>
<gene>
    <name evidence="1" type="primary">uxuA</name>
    <name type="ordered locus">EcHS_A4548</name>
</gene>
<name>UXUA_ECOHS</name>
<proteinExistence type="inferred from homology"/>
<reference key="1">
    <citation type="journal article" date="2008" name="J. Bacteriol.">
        <title>The pangenome structure of Escherichia coli: comparative genomic analysis of E. coli commensal and pathogenic isolates.</title>
        <authorList>
            <person name="Rasko D.A."/>
            <person name="Rosovitz M.J."/>
            <person name="Myers G.S.A."/>
            <person name="Mongodin E.F."/>
            <person name="Fricke W.F."/>
            <person name="Gajer P."/>
            <person name="Crabtree J."/>
            <person name="Sebaihia M."/>
            <person name="Thomson N.R."/>
            <person name="Chaudhuri R."/>
            <person name="Henderson I.R."/>
            <person name="Sperandio V."/>
            <person name="Ravel J."/>
        </authorList>
    </citation>
    <scope>NUCLEOTIDE SEQUENCE [LARGE SCALE GENOMIC DNA]</scope>
    <source>
        <strain>HS</strain>
    </source>
</reference>
<comment type="function">
    <text evidence="1">Catalyzes the dehydration of D-mannonate.</text>
</comment>
<comment type="catalytic activity">
    <reaction evidence="1">
        <text>D-mannonate = 2-dehydro-3-deoxy-D-gluconate + H2O</text>
        <dbReference type="Rhea" id="RHEA:20097"/>
        <dbReference type="ChEBI" id="CHEBI:15377"/>
        <dbReference type="ChEBI" id="CHEBI:17767"/>
        <dbReference type="ChEBI" id="CHEBI:57990"/>
        <dbReference type="EC" id="4.2.1.8"/>
    </reaction>
</comment>
<comment type="cofactor">
    <cofactor evidence="1">
        <name>Fe(2+)</name>
        <dbReference type="ChEBI" id="CHEBI:29033"/>
    </cofactor>
    <cofactor evidence="1">
        <name>Mn(2+)</name>
        <dbReference type="ChEBI" id="CHEBI:29035"/>
    </cofactor>
</comment>
<comment type="pathway">
    <text evidence="1">Carbohydrate metabolism; pentose and glucuronate interconversion.</text>
</comment>
<comment type="similarity">
    <text evidence="1">Belongs to the mannonate dehydratase family.</text>
</comment>
<keyword id="KW-0408">Iron</keyword>
<keyword id="KW-0456">Lyase</keyword>
<keyword id="KW-0464">Manganese</keyword>
<protein>
    <recommendedName>
        <fullName evidence="1">Mannonate dehydratase</fullName>
        <ecNumber evidence="1">4.2.1.8</ecNumber>
    </recommendedName>
    <alternativeName>
        <fullName evidence="1">D-mannonate hydro-lyase</fullName>
    </alternativeName>
</protein>
<sequence>MEQTWRWYGPNDPVSLADVRQAGATGVVTALHHIPNGEVWSVEEILKRKAIVEDAGLVWSVVESVPIHEDIKTHTGNYEQWIANYQQTLRNLAQCGIRTVCYNFMPVLDWTRTDLEYVLPDGSKALRFDQIEFAAFEMHILKRPGAEADYTEEEIAQAAERFATMSDEDKARLTRNIIAGLPGAEEGYTLDQFRKHLELYKDIDKAKLRENFAVFLKAIIPVAEEVGVRMAVHPDDPPRPILGLPRIVSTIEDMQWMVDTVNSMANGFTMCTGSYGVRADNDLVDMIKQFGPRIYFTHLRSTMREDNPKTFHEAAHLNGDVDMYEVVKAIVEEEHRRKAEGKEDLIPMRPDHGHQMLDDLKKKTNPGYSAIGRLKGLAEVRGVELAIQRAFFSR</sequence>
<evidence type="ECO:0000255" key="1">
    <source>
        <dbReference type="HAMAP-Rule" id="MF_00106"/>
    </source>
</evidence>
<accession>A8A847</accession>
<organism>
    <name type="scientific">Escherichia coli O9:H4 (strain HS)</name>
    <dbReference type="NCBI Taxonomy" id="331112"/>
    <lineage>
        <taxon>Bacteria</taxon>
        <taxon>Pseudomonadati</taxon>
        <taxon>Pseudomonadota</taxon>
        <taxon>Gammaproteobacteria</taxon>
        <taxon>Enterobacterales</taxon>
        <taxon>Enterobacteriaceae</taxon>
        <taxon>Escherichia</taxon>
    </lineage>
</organism>
<dbReference type="EC" id="4.2.1.8" evidence="1"/>
<dbReference type="EMBL" id="CP000802">
    <property type="protein sequence ID" value="ABV08701.1"/>
    <property type="molecule type" value="Genomic_DNA"/>
</dbReference>
<dbReference type="RefSeq" id="WP_000438582.1">
    <property type="nucleotide sequence ID" value="NC_009800.1"/>
</dbReference>
<dbReference type="SMR" id="A8A847"/>
<dbReference type="GeneID" id="93777517"/>
<dbReference type="KEGG" id="ecx:EcHS_A4548"/>
<dbReference type="HOGENOM" id="CLU_058621_2_0_6"/>
<dbReference type="UniPathway" id="UPA00246"/>
<dbReference type="GO" id="GO:0008198">
    <property type="term" value="F:ferrous iron binding"/>
    <property type="evidence" value="ECO:0007669"/>
    <property type="project" value="TreeGrafter"/>
</dbReference>
<dbReference type="GO" id="GO:0030145">
    <property type="term" value="F:manganese ion binding"/>
    <property type="evidence" value="ECO:0007669"/>
    <property type="project" value="TreeGrafter"/>
</dbReference>
<dbReference type="GO" id="GO:0008927">
    <property type="term" value="F:mannonate dehydratase activity"/>
    <property type="evidence" value="ECO:0007669"/>
    <property type="project" value="UniProtKB-UniRule"/>
</dbReference>
<dbReference type="GO" id="GO:0042840">
    <property type="term" value="P:D-glucuronate catabolic process"/>
    <property type="evidence" value="ECO:0007669"/>
    <property type="project" value="TreeGrafter"/>
</dbReference>
<dbReference type="FunFam" id="3.20.20.150:FF:000004">
    <property type="entry name" value="Mannonate dehydratase"/>
    <property type="match status" value="1"/>
</dbReference>
<dbReference type="FunFam" id="3.20.20.150:FF:000005">
    <property type="entry name" value="Mannonate dehydratase"/>
    <property type="match status" value="1"/>
</dbReference>
<dbReference type="Gene3D" id="3.20.20.150">
    <property type="entry name" value="Divalent-metal-dependent TIM barrel enzymes"/>
    <property type="match status" value="2"/>
</dbReference>
<dbReference type="HAMAP" id="MF_00106">
    <property type="entry name" value="UxuA"/>
    <property type="match status" value="1"/>
</dbReference>
<dbReference type="InterPro" id="IPR004628">
    <property type="entry name" value="Man_deHydtase"/>
</dbReference>
<dbReference type="InterPro" id="IPR036237">
    <property type="entry name" value="Xyl_isomerase-like_sf"/>
</dbReference>
<dbReference type="NCBIfam" id="NF003027">
    <property type="entry name" value="PRK03906.1"/>
    <property type="match status" value="1"/>
</dbReference>
<dbReference type="NCBIfam" id="TIGR00695">
    <property type="entry name" value="uxuA"/>
    <property type="match status" value="1"/>
</dbReference>
<dbReference type="PANTHER" id="PTHR30387">
    <property type="entry name" value="MANNONATE DEHYDRATASE"/>
    <property type="match status" value="1"/>
</dbReference>
<dbReference type="PANTHER" id="PTHR30387:SF2">
    <property type="entry name" value="MANNONATE DEHYDRATASE"/>
    <property type="match status" value="1"/>
</dbReference>
<dbReference type="Pfam" id="PF03786">
    <property type="entry name" value="UxuA"/>
    <property type="match status" value="1"/>
</dbReference>
<dbReference type="PIRSF" id="PIRSF016049">
    <property type="entry name" value="Man_dehyd"/>
    <property type="match status" value="1"/>
</dbReference>
<dbReference type="SUPFAM" id="SSF51658">
    <property type="entry name" value="Xylose isomerase-like"/>
    <property type="match status" value="1"/>
</dbReference>